<sequence>MKTFTAKPETVKRDWYVVDASGKTLGRLATELARRLRGKHKAEYTPHVDTGDYIIVLNAEKVAVTGNKRTDKIYYHHTGFVGGIKQATFEEMIARRPERVIEIAVKGMLPKGPLGRAMYRKLKVYAGTEHNHAAQQPQVLDI</sequence>
<accession>B1JL66</accession>
<keyword id="KW-0687">Ribonucleoprotein</keyword>
<keyword id="KW-0689">Ribosomal protein</keyword>
<gene>
    <name evidence="1" type="primary">rplM</name>
    <name type="ordered locus">YPK_0524</name>
</gene>
<comment type="function">
    <text evidence="1">This protein is one of the early assembly proteins of the 50S ribosomal subunit, although it is not seen to bind rRNA by itself. It is important during the early stages of 50S assembly.</text>
</comment>
<comment type="subunit">
    <text evidence="1">Part of the 50S ribosomal subunit.</text>
</comment>
<comment type="similarity">
    <text evidence="1">Belongs to the universal ribosomal protein uL13 family.</text>
</comment>
<dbReference type="EMBL" id="CP000950">
    <property type="protein sequence ID" value="ACA66827.1"/>
    <property type="molecule type" value="Genomic_DNA"/>
</dbReference>
<dbReference type="RefSeq" id="WP_002210132.1">
    <property type="nucleotide sequence ID" value="NZ_CP009792.1"/>
</dbReference>
<dbReference type="SMR" id="B1JL66"/>
<dbReference type="GeneID" id="96662998"/>
<dbReference type="KEGG" id="ypy:YPK_0524"/>
<dbReference type="PATRIC" id="fig|502800.11.peg.1133"/>
<dbReference type="GO" id="GO:0022625">
    <property type="term" value="C:cytosolic large ribosomal subunit"/>
    <property type="evidence" value="ECO:0007669"/>
    <property type="project" value="TreeGrafter"/>
</dbReference>
<dbReference type="GO" id="GO:0003729">
    <property type="term" value="F:mRNA binding"/>
    <property type="evidence" value="ECO:0007669"/>
    <property type="project" value="TreeGrafter"/>
</dbReference>
<dbReference type="GO" id="GO:0003735">
    <property type="term" value="F:structural constituent of ribosome"/>
    <property type="evidence" value="ECO:0007669"/>
    <property type="project" value="InterPro"/>
</dbReference>
<dbReference type="GO" id="GO:0017148">
    <property type="term" value="P:negative regulation of translation"/>
    <property type="evidence" value="ECO:0007669"/>
    <property type="project" value="TreeGrafter"/>
</dbReference>
<dbReference type="GO" id="GO:0006412">
    <property type="term" value="P:translation"/>
    <property type="evidence" value="ECO:0007669"/>
    <property type="project" value="UniProtKB-UniRule"/>
</dbReference>
<dbReference type="CDD" id="cd00392">
    <property type="entry name" value="Ribosomal_L13"/>
    <property type="match status" value="1"/>
</dbReference>
<dbReference type="FunFam" id="3.90.1180.10:FF:000001">
    <property type="entry name" value="50S ribosomal protein L13"/>
    <property type="match status" value="1"/>
</dbReference>
<dbReference type="Gene3D" id="3.90.1180.10">
    <property type="entry name" value="Ribosomal protein L13"/>
    <property type="match status" value="1"/>
</dbReference>
<dbReference type="HAMAP" id="MF_01366">
    <property type="entry name" value="Ribosomal_uL13"/>
    <property type="match status" value="1"/>
</dbReference>
<dbReference type="InterPro" id="IPR005822">
    <property type="entry name" value="Ribosomal_uL13"/>
</dbReference>
<dbReference type="InterPro" id="IPR005823">
    <property type="entry name" value="Ribosomal_uL13_bac-type"/>
</dbReference>
<dbReference type="InterPro" id="IPR023563">
    <property type="entry name" value="Ribosomal_uL13_CS"/>
</dbReference>
<dbReference type="InterPro" id="IPR036899">
    <property type="entry name" value="Ribosomal_uL13_sf"/>
</dbReference>
<dbReference type="NCBIfam" id="TIGR01066">
    <property type="entry name" value="rplM_bact"/>
    <property type="match status" value="1"/>
</dbReference>
<dbReference type="PANTHER" id="PTHR11545:SF2">
    <property type="entry name" value="LARGE RIBOSOMAL SUBUNIT PROTEIN UL13M"/>
    <property type="match status" value="1"/>
</dbReference>
<dbReference type="PANTHER" id="PTHR11545">
    <property type="entry name" value="RIBOSOMAL PROTEIN L13"/>
    <property type="match status" value="1"/>
</dbReference>
<dbReference type="Pfam" id="PF00572">
    <property type="entry name" value="Ribosomal_L13"/>
    <property type="match status" value="1"/>
</dbReference>
<dbReference type="PIRSF" id="PIRSF002181">
    <property type="entry name" value="Ribosomal_L13"/>
    <property type="match status" value="1"/>
</dbReference>
<dbReference type="SUPFAM" id="SSF52161">
    <property type="entry name" value="Ribosomal protein L13"/>
    <property type="match status" value="1"/>
</dbReference>
<dbReference type="PROSITE" id="PS00783">
    <property type="entry name" value="RIBOSOMAL_L13"/>
    <property type="match status" value="1"/>
</dbReference>
<organism>
    <name type="scientific">Yersinia pseudotuberculosis serotype O:3 (strain YPIII)</name>
    <dbReference type="NCBI Taxonomy" id="502800"/>
    <lineage>
        <taxon>Bacteria</taxon>
        <taxon>Pseudomonadati</taxon>
        <taxon>Pseudomonadota</taxon>
        <taxon>Gammaproteobacteria</taxon>
        <taxon>Enterobacterales</taxon>
        <taxon>Yersiniaceae</taxon>
        <taxon>Yersinia</taxon>
    </lineage>
</organism>
<proteinExistence type="inferred from homology"/>
<protein>
    <recommendedName>
        <fullName evidence="1">Large ribosomal subunit protein uL13</fullName>
    </recommendedName>
    <alternativeName>
        <fullName evidence="2">50S ribosomal protein L13</fullName>
    </alternativeName>
</protein>
<evidence type="ECO:0000255" key="1">
    <source>
        <dbReference type="HAMAP-Rule" id="MF_01366"/>
    </source>
</evidence>
<evidence type="ECO:0000305" key="2"/>
<feature type="chain" id="PRO_1000144204" description="Large ribosomal subunit protein uL13">
    <location>
        <begin position="1"/>
        <end position="142"/>
    </location>
</feature>
<name>RL13_YERPY</name>
<reference key="1">
    <citation type="submission" date="2008-02" db="EMBL/GenBank/DDBJ databases">
        <title>Complete sequence of Yersinia pseudotuberculosis YPIII.</title>
        <authorList>
            <consortium name="US DOE Joint Genome Institute"/>
            <person name="Copeland A."/>
            <person name="Lucas S."/>
            <person name="Lapidus A."/>
            <person name="Glavina del Rio T."/>
            <person name="Dalin E."/>
            <person name="Tice H."/>
            <person name="Bruce D."/>
            <person name="Goodwin L."/>
            <person name="Pitluck S."/>
            <person name="Munk A.C."/>
            <person name="Brettin T."/>
            <person name="Detter J.C."/>
            <person name="Han C."/>
            <person name="Tapia R."/>
            <person name="Schmutz J."/>
            <person name="Larimer F."/>
            <person name="Land M."/>
            <person name="Hauser L."/>
            <person name="Challacombe J.F."/>
            <person name="Green L."/>
            <person name="Lindler L.E."/>
            <person name="Nikolich M.P."/>
            <person name="Richardson P."/>
        </authorList>
    </citation>
    <scope>NUCLEOTIDE SEQUENCE [LARGE SCALE GENOMIC DNA]</scope>
    <source>
        <strain>YPIII</strain>
    </source>
</reference>